<comment type="function">
    <text evidence="1">This b-type cytochrome is tightly associated with the reaction center of photosystem II (PSII). PSII is a light-driven water:plastoquinone oxidoreductase that uses light energy to abstract electrons from H(2)O, generating O(2) and a proton gradient subsequently used for ATP formation. It consists of a core antenna complex that captures photons, and an electron transfer chain that converts photonic excitation into a charge separation.</text>
</comment>
<comment type="cofactor">
    <cofactor evidence="1">
        <name>heme b</name>
        <dbReference type="ChEBI" id="CHEBI:60344"/>
    </cofactor>
    <text evidence="1">With its partner (PsbF) binds heme. PSII binds additional chlorophylls, carotenoids and specific lipids.</text>
</comment>
<comment type="subunit">
    <text evidence="1">Heterodimer of an alpha subunit and a beta subunit. PSII is composed of 1 copy each of membrane proteins PsbA, PsbB, PsbC, PsbD, PsbE, PsbF, PsbH, PsbI, PsbJ, PsbK, PsbL, PsbM, PsbT, PsbX, PsbY, PsbZ, Psb30/Ycf12, peripheral proteins PsbO, CyanoQ (PsbQ), PsbU, PsbV and a large number of cofactors. It forms dimeric complexes.</text>
</comment>
<comment type="subcellular location">
    <subcellularLocation>
        <location evidence="1">Cellular thylakoid membrane</location>
        <topology evidence="1">Single-pass membrane protein</topology>
    </subcellularLocation>
</comment>
<comment type="similarity">
    <text evidence="1">Belongs to the PsbE/PsbF family.</text>
</comment>
<evidence type="ECO:0000255" key="1">
    <source>
        <dbReference type="HAMAP-Rule" id="MF_00642"/>
    </source>
</evidence>
<organism>
    <name type="scientific">Synechococcus sp. (strain WH7803)</name>
    <dbReference type="NCBI Taxonomy" id="32051"/>
    <lineage>
        <taxon>Bacteria</taxon>
        <taxon>Bacillati</taxon>
        <taxon>Cyanobacteriota</taxon>
        <taxon>Cyanophyceae</taxon>
        <taxon>Synechococcales</taxon>
        <taxon>Synechococcaceae</taxon>
        <taxon>Synechococcus</taxon>
    </lineage>
</organism>
<reference key="1">
    <citation type="submission" date="2006-05" db="EMBL/GenBank/DDBJ databases">
        <authorList>
            <consortium name="Genoscope"/>
        </authorList>
    </citation>
    <scope>NUCLEOTIDE SEQUENCE [LARGE SCALE GENOMIC DNA]</scope>
    <source>
        <strain>WH7803</strain>
    </source>
</reference>
<sequence>MAAGSTGERPFFEIITSIRYWVIHAITLPSIFLAGFLFVSTGLAYDAFGTPRPDAYFQATESKAPVVSQRYEGKSQLDDRLQ</sequence>
<feature type="chain" id="PRO_1000056932" description="Cytochrome b559 subunit alpha">
    <location>
        <begin position="1"/>
        <end position="82"/>
    </location>
</feature>
<feature type="transmembrane region" description="Helical" evidence="1">
    <location>
        <begin position="22"/>
        <end position="36"/>
    </location>
</feature>
<feature type="binding site" description="axial binding residue" evidence="1">
    <location>
        <position position="24"/>
    </location>
    <ligand>
        <name>heme</name>
        <dbReference type="ChEBI" id="CHEBI:30413"/>
        <note>ligand shared with beta subunit</note>
    </ligand>
    <ligandPart>
        <name>Fe</name>
        <dbReference type="ChEBI" id="CHEBI:18248"/>
    </ligandPart>
</feature>
<accession>A5GIB0</accession>
<keyword id="KW-0249">Electron transport</keyword>
<keyword id="KW-0349">Heme</keyword>
<keyword id="KW-0408">Iron</keyword>
<keyword id="KW-0472">Membrane</keyword>
<keyword id="KW-0479">Metal-binding</keyword>
<keyword id="KW-0602">Photosynthesis</keyword>
<keyword id="KW-0604">Photosystem II</keyword>
<keyword id="KW-1185">Reference proteome</keyword>
<keyword id="KW-0793">Thylakoid</keyword>
<keyword id="KW-0812">Transmembrane</keyword>
<keyword id="KW-1133">Transmembrane helix</keyword>
<keyword id="KW-0813">Transport</keyword>
<name>PSBE_SYNPW</name>
<protein>
    <recommendedName>
        <fullName evidence="1">Cytochrome b559 subunit alpha</fullName>
    </recommendedName>
    <alternativeName>
        <fullName evidence="1">PSII reaction center subunit V</fullName>
    </alternativeName>
</protein>
<gene>
    <name evidence="1" type="primary">psbE</name>
    <name type="ordered locus">SynWH7803_0249</name>
</gene>
<proteinExistence type="inferred from homology"/>
<dbReference type="EMBL" id="CT971583">
    <property type="protein sequence ID" value="CAK22675.1"/>
    <property type="molecule type" value="Genomic_DNA"/>
</dbReference>
<dbReference type="SMR" id="A5GIB0"/>
<dbReference type="STRING" id="32051.SynWH7803_0249"/>
<dbReference type="KEGG" id="syx:SynWH7803_0249"/>
<dbReference type="eggNOG" id="ENOG5032GCS">
    <property type="taxonomic scope" value="Bacteria"/>
</dbReference>
<dbReference type="HOGENOM" id="CLU_194095_0_0_3"/>
<dbReference type="OrthoDB" id="514620at2"/>
<dbReference type="Proteomes" id="UP000001566">
    <property type="component" value="Chromosome"/>
</dbReference>
<dbReference type="GO" id="GO:0009523">
    <property type="term" value="C:photosystem II"/>
    <property type="evidence" value="ECO:0007669"/>
    <property type="project" value="UniProtKB-KW"/>
</dbReference>
<dbReference type="GO" id="GO:0031676">
    <property type="term" value="C:plasma membrane-derived thylakoid membrane"/>
    <property type="evidence" value="ECO:0007669"/>
    <property type="project" value="UniProtKB-SubCell"/>
</dbReference>
<dbReference type="GO" id="GO:0009055">
    <property type="term" value="F:electron transfer activity"/>
    <property type="evidence" value="ECO:0007669"/>
    <property type="project" value="UniProtKB-UniRule"/>
</dbReference>
<dbReference type="GO" id="GO:0020037">
    <property type="term" value="F:heme binding"/>
    <property type="evidence" value="ECO:0007669"/>
    <property type="project" value="InterPro"/>
</dbReference>
<dbReference type="GO" id="GO:0005506">
    <property type="term" value="F:iron ion binding"/>
    <property type="evidence" value="ECO:0007669"/>
    <property type="project" value="UniProtKB-UniRule"/>
</dbReference>
<dbReference type="GO" id="GO:0009767">
    <property type="term" value="P:photosynthetic electron transport chain"/>
    <property type="evidence" value="ECO:0007669"/>
    <property type="project" value="InterPro"/>
</dbReference>
<dbReference type="Gene3D" id="1.20.5.860">
    <property type="entry name" value="Photosystem II cytochrome b559, alpha subunit"/>
    <property type="match status" value="1"/>
</dbReference>
<dbReference type="HAMAP" id="MF_00642">
    <property type="entry name" value="PSII_PsbE"/>
    <property type="match status" value="1"/>
</dbReference>
<dbReference type="InterPro" id="IPR006217">
    <property type="entry name" value="PSII_cyt_b559_asu"/>
</dbReference>
<dbReference type="InterPro" id="IPR037025">
    <property type="entry name" value="PSII_cyt_b559_asu_sf"/>
</dbReference>
<dbReference type="InterPro" id="IPR013081">
    <property type="entry name" value="PSII_cyt_b559_N"/>
</dbReference>
<dbReference type="InterPro" id="IPR013082">
    <property type="entry name" value="PSII_cytb559_asu_lum"/>
</dbReference>
<dbReference type="NCBIfam" id="TIGR01332">
    <property type="entry name" value="cyt_b559_alpha"/>
    <property type="match status" value="1"/>
</dbReference>
<dbReference type="PANTHER" id="PTHR33391">
    <property type="entry name" value="CYTOCHROME B559 SUBUNIT BETA-RELATED"/>
    <property type="match status" value="1"/>
</dbReference>
<dbReference type="PANTHER" id="PTHR33391:SF9">
    <property type="entry name" value="CYTOCHROME B559 SUBUNIT BETA-RELATED"/>
    <property type="match status" value="1"/>
</dbReference>
<dbReference type="Pfam" id="PF00283">
    <property type="entry name" value="Cytochrom_B559"/>
    <property type="match status" value="1"/>
</dbReference>
<dbReference type="Pfam" id="PF00284">
    <property type="entry name" value="Cytochrom_B559a"/>
    <property type="match status" value="1"/>
</dbReference>
<dbReference type="PIRSF" id="PIRSF000036">
    <property type="entry name" value="PsbE"/>
    <property type="match status" value="1"/>
</dbReference>
<dbReference type="SUPFAM" id="SSF161045">
    <property type="entry name" value="Cytochrome b559 subunits"/>
    <property type="match status" value="1"/>
</dbReference>